<sequence length="102" mass="10170">MKFSTLSTVAAIAAFASADSTSDGVTYVDVTTTPQSTTSMVSTVKTTSTPYTTSTIATLSTKSISSQANTTTHEISTYVGAAVKGSVAGMGAIMGAAAFALL</sequence>
<comment type="subcellular location">
    <subcellularLocation>
        <location evidence="8 9">Secreted</location>
        <location evidence="8 9">Cell wall</location>
    </subcellularLocation>
    <subcellularLocation>
        <location evidence="7">Membrane</location>
        <topology evidence="7">Lipid-anchor</topology>
        <topology evidence="7">GPI-anchor</topology>
    </subcellularLocation>
</comment>
<comment type="induction">
    <text evidence="3 5">Expression decreases in response to ergosterol perturbation or upon entry into stationary phase.</text>
</comment>
<comment type="PTM">
    <text evidence="1">The GPI-anchor is attached to the protein in the endoplasmic reticulum and serves to target the protein to the cell surface. There, the glucosamine-inositol phospholipid moiety is cleaved off and the GPI-modified mannoprotein is covalently attached via its lipidless GPI glycan remnant to the 1,6-beta-glucan of the outer cell wall layer (By similarity).</text>
</comment>
<comment type="disruption phenotype">
    <text evidence="6">Increases resistance to lactic acid.</text>
</comment>
<comment type="miscellaneous">
    <text evidence="4">Present with 1480 molecules/cell in log phase SD medium.</text>
</comment>
<comment type="similarity">
    <text evidence="7">Belongs to the TOS6 family.</text>
</comment>
<feature type="signal peptide" evidence="2">
    <location>
        <begin position="1"/>
        <end position="18"/>
    </location>
</feature>
<feature type="chain" id="PRO_0000203371" description="Protein TOS6">
    <location>
        <begin position="19"/>
        <end position="80"/>
    </location>
</feature>
<feature type="propeptide" id="PRO_0000372450" description="Removed in mature form" evidence="2">
    <location>
        <begin position="81"/>
        <end position="102"/>
    </location>
</feature>
<feature type="lipid moiety-binding region" description="GPI-anchor amidated glycine" evidence="2">
    <location>
        <position position="80"/>
    </location>
</feature>
<feature type="glycosylation site" description="N-linked (GlcNAc...) asparagine" evidence="2">
    <location>
        <position position="69"/>
    </location>
</feature>
<reference key="1">
    <citation type="journal article" date="1995" name="Yeast">
        <title>Sequence analysis of a 30 kb DNA segment from yeast chromosome XIV carrying a ribosomal protein gene cluster, the genes encoding a plasma membrane protein and a subunit of replication factor C, and a novel putative serine/threonine protein kinase gene.</title>
        <authorList>
            <person name="Maurer K.C.T."/>
            <person name="Urbanus J.H.M."/>
            <person name="Planta R.J."/>
        </authorList>
    </citation>
    <scope>NUCLEOTIDE SEQUENCE [GENOMIC DNA]</scope>
    <source>
        <strain>ATCC 96604 / S288c / FY1679</strain>
    </source>
</reference>
<reference key="2">
    <citation type="journal article" date="1997" name="Nature">
        <title>The nucleotide sequence of Saccharomyces cerevisiae chromosome XIV and its evolutionary implications.</title>
        <authorList>
            <person name="Philippsen P."/>
            <person name="Kleine K."/>
            <person name="Poehlmann R."/>
            <person name="Duesterhoeft A."/>
            <person name="Hamberg K."/>
            <person name="Hegemann J.H."/>
            <person name="Obermaier B."/>
            <person name="Urrestarazu L.A."/>
            <person name="Aert R."/>
            <person name="Albermann K."/>
            <person name="Altmann R."/>
            <person name="Andre B."/>
            <person name="Baladron V."/>
            <person name="Ballesta J.P.G."/>
            <person name="Becam A.-M."/>
            <person name="Beinhauer J.D."/>
            <person name="Boskovic J."/>
            <person name="Buitrago M.J."/>
            <person name="Bussereau F."/>
            <person name="Coster F."/>
            <person name="Crouzet M."/>
            <person name="D'Angelo M."/>
            <person name="Dal Pero F."/>
            <person name="De Antoni A."/>
            <person name="del Rey F."/>
            <person name="Doignon F."/>
            <person name="Domdey H."/>
            <person name="Dubois E."/>
            <person name="Fiedler T.A."/>
            <person name="Fleig U."/>
            <person name="Floeth M."/>
            <person name="Fritz C."/>
            <person name="Gaillardin C."/>
            <person name="Garcia-Cantalejo J.M."/>
            <person name="Glansdorff N."/>
            <person name="Goffeau A."/>
            <person name="Gueldener U."/>
            <person name="Herbert C.J."/>
            <person name="Heumann K."/>
            <person name="Heuss-Neitzel D."/>
            <person name="Hilbert H."/>
            <person name="Hinni K."/>
            <person name="Iraqui Houssaini I."/>
            <person name="Jacquet M."/>
            <person name="Jimenez A."/>
            <person name="Jonniaux J.-L."/>
            <person name="Karpfinger-Hartl L."/>
            <person name="Lanfranchi G."/>
            <person name="Lepingle A."/>
            <person name="Levesque H."/>
            <person name="Lyck R."/>
            <person name="Maftahi M."/>
            <person name="Mallet L."/>
            <person name="Maurer C.T.C."/>
            <person name="Messenguy F."/>
            <person name="Mewes H.-W."/>
            <person name="Moestl D."/>
            <person name="Nasr F."/>
            <person name="Nicaud J.-M."/>
            <person name="Niedenthal R.K."/>
            <person name="Pandolfo D."/>
            <person name="Pierard A."/>
            <person name="Piravandi E."/>
            <person name="Planta R.J."/>
            <person name="Pohl T.M."/>
            <person name="Purnelle B."/>
            <person name="Rebischung C."/>
            <person name="Remacha M.A."/>
            <person name="Revuelta J.L."/>
            <person name="Rinke M."/>
            <person name="Saiz J.E."/>
            <person name="Sartorello F."/>
            <person name="Scherens B."/>
            <person name="Sen-Gupta M."/>
            <person name="Soler-Mira A."/>
            <person name="Urbanus J.H.M."/>
            <person name="Valle G."/>
            <person name="Van Dyck L."/>
            <person name="Verhasselt P."/>
            <person name="Vierendeels F."/>
            <person name="Vissers S."/>
            <person name="Voet M."/>
            <person name="Volckaert G."/>
            <person name="Wach A."/>
            <person name="Wambutt R."/>
            <person name="Wedler H."/>
            <person name="Zollner A."/>
            <person name="Hani J."/>
        </authorList>
    </citation>
    <scope>NUCLEOTIDE SEQUENCE [LARGE SCALE GENOMIC DNA]</scope>
    <source>
        <strain>ATCC 204508 / S288c</strain>
    </source>
</reference>
<reference key="3">
    <citation type="journal article" date="2014" name="G3 (Bethesda)">
        <title>The reference genome sequence of Saccharomyces cerevisiae: Then and now.</title>
        <authorList>
            <person name="Engel S.R."/>
            <person name="Dietrich F.S."/>
            <person name="Fisk D.G."/>
            <person name="Binkley G."/>
            <person name="Balakrishnan R."/>
            <person name="Costanzo M.C."/>
            <person name="Dwight S.S."/>
            <person name="Hitz B.C."/>
            <person name="Karra K."/>
            <person name="Nash R.S."/>
            <person name="Weng S."/>
            <person name="Wong E.D."/>
            <person name="Lloyd P."/>
            <person name="Skrzypek M.S."/>
            <person name="Miyasato S.R."/>
            <person name="Simison M."/>
            <person name="Cherry J.M."/>
        </authorList>
    </citation>
    <scope>GENOME REANNOTATION</scope>
    <source>
        <strain>ATCC 204508 / S288c</strain>
    </source>
</reference>
<reference key="4">
    <citation type="journal article" date="2007" name="Genome Res.">
        <title>Approaching a complete repository of sequence-verified protein-encoding clones for Saccharomyces cerevisiae.</title>
        <authorList>
            <person name="Hu Y."/>
            <person name="Rolfs A."/>
            <person name="Bhullar B."/>
            <person name="Murthy T.V.S."/>
            <person name="Zhu C."/>
            <person name="Berger M.F."/>
            <person name="Camargo A.A."/>
            <person name="Kelley F."/>
            <person name="McCarron S."/>
            <person name="Jepson D."/>
            <person name="Richardson A."/>
            <person name="Raphael J."/>
            <person name="Moreira D."/>
            <person name="Taycher E."/>
            <person name="Zuo D."/>
            <person name="Mohr S."/>
            <person name="Kane M.F."/>
            <person name="Williamson J."/>
            <person name="Simpson A.J.G."/>
            <person name="Bulyk M.L."/>
            <person name="Harlow E."/>
            <person name="Marsischky G."/>
            <person name="Kolodner R.D."/>
            <person name="LaBaer J."/>
        </authorList>
    </citation>
    <scope>NUCLEOTIDE SEQUENCE [GENOMIC DNA]</scope>
    <source>
        <strain>ATCC 204508 / S288c</strain>
    </source>
</reference>
<reference key="5">
    <citation type="journal article" date="1998" name="Mol. Gen. Genet.">
        <title>Screening for glycosylphosphatidylinositol (GPI)-dependent cell wall proteins in Saccharomyces cerevisiae.</title>
        <authorList>
            <person name="Hamada K."/>
            <person name="Fukuchi S."/>
            <person name="Arisawa M."/>
            <person name="Baba M."/>
            <person name="Kitada K."/>
        </authorList>
    </citation>
    <scope>SUBCELLULAR LOCATION</scope>
</reference>
<reference key="6">
    <citation type="journal article" date="2000" name="Antimicrob. Agents Chemother.">
        <title>Genome-wide expression patterns in Saccharomyces cerevisiae: comparison of drug treatments and genetic alterations affecting biosynthesis of ergosterol.</title>
        <authorList>
            <person name="Bammert G.F."/>
            <person name="Fostel J.M."/>
        </authorList>
    </citation>
    <scope>INDUCTION</scope>
</reference>
<reference key="7">
    <citation type="journal article" date="2003" name="Nature">
        <title>Global analysis of protein expression in yeast.</title>
        <authorList>
            <person name="Ghaemmaghami S."/>
            <person name="Huh W.-K."/>
            <person name="Bower K."/>
            <person name="Howson R.W."/>
            <person name="Belle A."/>
            <person name="Dephoure N."/>
            <person name="O'Shea E.K."/>
            <person name="Weissman J.S."/>
        </authorList>
    </citation>
    <scope>LEVEL OF PROTEIN EXPRESSION [LARGE SCALE ANALYSIS]</scope>
</reference>
<reference key="8">
    <citation type="journal article" date="2005" name="Science">
        <title>Logic of the yeast metabolic cycle: temporal compartmentalization of cellular processes.</title>
        <authorList>
            <person name="Tu B.P."/>
            <person name="Kudlicki A."/>
            <person name="Rowicka M."/>
            <person name="McKnight S.L."/>
        </authorList>
    </citation>
    <scope>INDUCTION</scope>
</reference>
<reference key="9">
    <citation type="journal article" date="2006" name="FEMS Yeast Res.">
        <title>Yeast genes involved in response to lactic acid and acetic acid: acidic conditions caused by the organic acids in Saccharomyces cerevisiae cultures induce expression of intracellular metal metabolism genes regulated by Aft1p.</title>
        <authorList>
            <person name="Kawahata M."/>
            <person name="Masaki K."/>
            <person name="Fujii T."/>
            <person name="Iefuji H."/>
        </authorList>
    </citation>
    <scope>DISRUPTION PHENOTYPE</scope>
</reference>
<reference key="10">
    <citation type="journal article" date="2009" name="Traffic">
        <title>Concentration of GPI-anchored proteins upon ER exit in yeast.</title>
        <authorList>
            <person name="Castillon G.A."/>
            <person name="Watanabe R."/>
            <person name="Taylor M."/>
            <person name="Schwabe T.M."/>
            <person name="Riezman H."/>
        </authorList>
    </citation>
    <scope>SUBCELLULAR LOCATION</scope>
</reference>
<dbReference type="EMBL" id="U23084">
    <property type="protein sequence ID" value="AAC49098.1"/>
    <property type="molecule type" value="Genomic_DNA"/>
</dbReference>
<dbReference type="EMBL" id="Z71576">
    <property type="protein sequence ID" value="CAA96218.1"/>
    <property type="molecule type" value="Genomic_DNA"/>
</dbReference>
<dbReference type="EMBL" id="AY692649">
    <property type="protein sequence ID" value="AAT92668.1"/>
    <property type="molecule type" value="Genomic_DNA"/>
</dbReference>
<dbReference type="EMBL" id="BK006947">
    <property type="protein sequence ID" value="DAA10260.1"/>
    <property type="molecule type" value="Genomic_DNA"/>
</dbReference>
<dbReference type="PIR" id="S60400">
    <property type="entry name" value="S60400"/>
</dbReference>
<dbReference type="RefSeq" id="NP_014099.1">
    <property type="nucleotide sequence ID" value="NM_001183138.1"/>
</dbReference>
<dbReference type="BioGRID" id="35538">
    <property type="interactions" value="75"/>
</dbReference>
<dbReference type="DIP" id="DIP-4464N"/>
<dbReference type="FunCoup" id="P48560">
    <property type="interactions" value="96"/>
</dbReference>
<dbReference type="STRING" id="4932.YNL300W"/>
<dbReference type="GlyCosmos" id="P48560">
    <property type="glycosylation" value="1 site, No reported glycans"/>
</dbReference>
<dbReference type="GlyGen" id="P48560">
    <property type="glycosylation" value="1 site"/>
</dbReference>
<dbReference type="PaxDb" id="4932-YNL300W"/>
<dbReference type="PeptideAtlas" id="P48560"/>
<dbReference type="EnsemblFungi" id="YNL300W_mRNA">
    <property type="protein sequence ID" value="YNL300W"/>
    <property type="gene ID" value="YNL300W"/>
</dbReference>
<dbReference type="GeneID" id="855416"/>
<dbReference type="KEGG" id="sce:YNL300W"/>
<dbReference type="AGR" id="SGD:S000005244"/>
<dbReference type="SGD" id="S000005244">
    <property type="gene designation" value="TOS6"/>
</dbReference>
<dbReference type="VEuPathDB" id="FungiDB:YNL300W"/>
<dbReference type="eggNOG" id="ENOG502SCUF">
    <property type="taxonomic scope" value="Eukaryota"/>
</dbReference>
<dbReference type="HOGENOM" id="CLU_2279081_0_0_1"/>
<dbReference type="InParanoid" id="P48560"/>
<dbReference type="OMA" id="CSGGCTP"/>
<dbReference type="BioCyc" id="YEAST:G3O-33288-MONOMER"/>
<dbReference type="BioGRID-ORCS" id="855416">
    <property type="hits" value="0 hits in 10 CRISPR screens"/>
</dbReference>
<dbReference type="PRO" id="PR:P48560"/>
<dbReference type="Proteomes" id="UP000002311">
    <property type="component" value="Chromosome XIV"/>
</dbReference>
<dbReference type="RNAct" id="P48560">
    <property type="molecule type" value="protein"/>
</dbReference>
<dbReference type="GO" id="GO:0005829">
    <property type="term" value="C:cytosol"/>
    <property type="evidence" value="ECO:0007005"/>
    <property type="project" value="SGD"/>
</dbReference>
<dbReference type="GO" id="GO:0005576">
    <property type="term" value="C:extracellular region"/>
    <property type="evidence" value="ECO:0007669"/>
    <property type="project" value="UniProtKB-KW"/>
</dbReference>
<dbReference type="GO" id="GO:0009277">
    <property type="term" value="C:fungal-type cell wall"/>
    <property type="evidence" value="ECO:0000314"/>
    <property type="project" value="SGD"/>
</dbReference>
<dbReference type="GO" id="GO:0098552">
    <property type="term" value="C:side of membrane"/>
    <property type="evidence" value="ECO:0007669"/>
    <property type="project" value="UniProtKB-KW"/>
</dbReference>
<dbReference type="CDD" id="cd22955">
    <property type="entry name" value="TOS6"/>
    <property type="match status" value="1"/>
</dbReference>
<name>TOS6_YEAST</name>
<protein>
    <recommendedName>
        <fullName>Protein TOS6</fullName>
    </recommendedName>
</protein>
<accession>P48560</accession>
<accession>D6W0P4</accession>
<proteinExistence type="evidence at protein level"/>
<evidence type="ECO:0000250" key="1"/>
<evidence type="ECO:0000255" key="2"/>
<evidence type="ECO:0000269" key="3">
    <source>
    </source>
</evidence>
<evidence type="ECO:0000269" key="4">
    <source>
    </source>
</evidence>
<evidence type="ECO:0000269" key="5">
    <source>
    </source>
</evidence>
<evidence type="ECO:0000269" key="6">
    <source>
    </source>
</evidence>
<evidence type="ECO:0000305" key="7"/>
<evidence type="ECO:0000305" key="8">
    <source>
    </source>
</evidence>
<evidence type="ECO:0000305" key="9">
    <source>
    </source>
</evidence>
<keyword id="KW-0134">Cell wall</keyword>
<keyword id="KW-0325">Glycoprotein</keyword>
<keyword id="KW-0336">GPI-anchor</keyword>
<keyword id="KW-0449">Lipoprotein</keyword>
<keyword id="KW-0472">Membrane</keyword>
<keyword id="KW-1185">Reference proteome</keyword>
<keyword id="KW-0964">Secreted</keyword>
<keyword id="KW-0732">Signal</keyword>
<gene>
    <name type="primary">TOS6</name>
    <name type="ordered locus">YNL300W</name>
    <name type="ORF">N0430</name>
</gene>
<organism>
    <name type="scientific">Saccharomyces cerevisiae (strain ATCC 204508 / S288c)</name>
    <name type="common">Baker's yeast</name>
    <dbReference type="NCBI Taxonomy" id="559292"/>
    <lineage>
        <taxon>Eukaryota</taxon>
        <taxon>Fungi</taxon>
        <taxon>Dikarya</taxon>
        <taxon>Ascomycota</taxon>
        <taxon>Saccharomycotina</taxon>
        <taxon>Saccharomycetes</taxon>
        <taxon>Saccharomycetales</taxon>
        <taxon>Saccharomycetaceae</taxon>
        <taxon>Saccharomyces</taxon>
    </lineage>
</organism>